<organism>
    <name type="scientific">Paramagnetospirillum magneticum (strain ATCC 700264 / AMB-1)</name>
    <name type="common">Magnetospirillum magneticum</name>
    <dbReference type="NCBI Taxonomy" id="342108"/>
    <lineage>
        <taxon>Bacteria</taxon>
        <taxon>Pseudomonadati</taxon>
        <taxon>Pseudomonadota</taxon>
        <taxon>Alphaproteobacteria</taxon>
        <taxon>Rhodospirillales</taxon>
        <taxon>Magnetospirillaceae</taxon>
        <taxon>Paramagnetospirillum</taxon>
    </lineage>
</organism>
<name>ZNUC_PARM1</name>
<gene>
    <name evidence="1" type="primary">znuC</name>
    <name type="ordered locus">amb2310</name>
</gene>
<protein>
    <recommendedName>
        <fullName evidence="1">Zinc import ATP-binding protein ZnuC</fullName>
        <ecNumber evidence="1">7.2.2.20</ecNumber>
    </recommendedName>
</protein>
<reference key="1">
    <citation type="journal article" date="2005" name="DNA Res.">
        <title>Complete genome sequence of the facultative anaerobic magnetotactic bacterium Magnetospirillum sp. strain AMB-1.</title>
        <authorList>
            <person name="Matsunaga T."/>
            <person name="Okamura Y."/>
            <person name="Fukuda Y."/>
            <person name="Wahyudi A.T."/>
            <person name="Murase Y."/>
            <person name="Takeyama H."/>
        </authorList>
    </citation>
    <scope>NUCLEOTIDE SEQUENCE [LARGE SCALE GENOMIC DNA]</scope>
    <source>
        <strain>ATCC 700264 / AMB-1</strain>
    </source>
</reference>
<sequence>MSLLNLSGVRLSHGGHLVLDRVDLTVDAGRIITVVGPNGAGKSSLLKVALGLLRPDAGTVERGAKVIGYVPQRLDIGRLLPLSVRRFLAMAVAERPPAGRLEETLDLVGAGHVLGRQVVDLSGGEMQRVLLARALLRRPDLLVLDEPVGGVDVAGQAELYDLITGQAREHGVGVLMVSHDLHVVMAATDHVVCLNRHVCCAGHPETVSRHPEYLALFGPRVAASLAIYTHAHDHGHGADGSVLPLAEGGGEPHTHGPGCRHG</sequence>
<keyword id="KW-0067">ATP-binding</keyword>
<keyword id="KW-0997">Cell inner membrane</keyword>
<keyword id="KW-1003">Cell membrane</keyword>
<keyword id="KW-0406">Ion transport</keyword>
<keyword id="KW-0472">Membrane</keyword>
<keyword id="KW-0547">Nucleotide-binding</keyword>
<keyword id="KW-1278">Translocase</keyword>
<keyword id="KW-0813">Transport</keyword>
<keyword id="KW-0862">Zinc</keyword>
<keyword id="KW-0864">Zinc transport</keyword>
<comment type="function">
    <text evidence="1">Part of the ABC transporter complex ZnuABC involved in zinc import. Responsible for energy coupling to the transport system.</text>
</comment>
<comment type="catalytic activity">
    <reaction evidence="1">
        <text>Zn(2+)(out) + ATP(in) + H2O(in) = Zn(2+)(in) + ADP(in) + phosphate(in) + H(+)(in)</text>
        <dbReference type="Rhea" id="RHEA:29795"/>
        <dbReference type="ChEBI" id="CHEBI:15377"/>
        <dbReference type="ChEBI" id="CHEBI:15378"/>
        <dbReference type="ChEBI" id="CHEBI:29105"/>
        <dbReference type="ChEBI" id="CHEBI:30616"/>
        <dbReference type="ChEBI" id="CHEBI:43474"/>
        <dbReference type="ChEBI" id="CHEBI:456216"/>
        <dbReference type="EC" id="7.2.2.20"/>
    </reaction>
</comment>
<comment type="subunit">
    <text evidence="1">The complex is composed of two ATP-binding proteins (ZnuC), two transmembrane proteins (ZnuB) and a solute-binding protein (ZnuA).</text>
</comment>
<comment type="subcellular location">
    <subcellularLocation>
        <location evidence="1">Cell inner membrane</location>
        <topology evidence="1">Peripheral membrane protein</topology>
    </subcellularLocation>
</comment>
<comment type="similarity">
    <text evidence="1">Belongs to the ABC transporter superfamily. Zinc importer (TC 3.A.1.15.5) family.</text>
</comment>
<dbReference type="EC" id="7.2.2.20" evidence="1"/>
<dbReference type="EMBL" id="AP007255">
    <property type="protein sequence ID" value="BAE51114.1"/>
    <property type="molecule type" value="Genomic_DNA"/>
</dbReference>
<dbReference type="RefSeq" id="WP_011384707.1">
    <property type="nucleotide sequence ID" value="NC_007626.1"/>
</dbReference>
<dbReference type="SMR" id="Q2W4W1"/>
<dbReference type="STRING" id="342108.amb2310"/>
<dbReference type="KEGG" id="mag:amb2310"/>
<dbReference type="HOGENOM" id="CLU_000604_1_11_5"/>
<dbReference type="OrthoDB" id="9780942at2"/>
<dbReference type="Proteomes" id="UP000007058">
    <property type="component" value="Chromosome"/>
</dbReference>
<dbReference type="GO" id="GO:0005886">
    <property type="term" value="C:plasma membrane"/>
    <property type="evidence" value="ECO:0007669"/>
    <property type="project" value="UniProtKB-SubCell"/>
</dbReference>
<dbReference type="GO" id="GO:0015633">
    <property type="term" value="F:ABC-type zinc transporter activity"/>
    <property type="evidence" value="ECO:0007669"/>
    <property type="project" value="UniProtKB-EC"/>
</dbReference>
<dbReference type="GO" id="GO:0005524">
    <property type="term" value="F:ATP binding"/>
    <property type="evidence" value="ECO:0007669"/>
    <property type="project" value="UniProtKB-KW"/>
</dbReference>
<dbReference type="GO" id="GO:0016887">
    <property type="term" value="F:ATP hydrolysis activity"/>
    <property type="evidence" value="ECO:0007669"/>
    <property type="project" value="InterPro"/>
</dbReference>
<dbReference type="GO" id="GO:0010043">
    <property type="term" value="P:response to zinc ion"/>
    <property type="evidence" value="ECO:0007669"/>
    <property type="project" value="TreeGrafter"/>
</dbReference>
<dbReference type="Gene3D" id="3.40.50.300">
    <property type="entry name" value="P-loop containing nucleotide triphosphate hydrolases"/>
    <property type="match status" value="1"/>
</dbReference>
<dbReference type="InterPro" id="IPR003593">
    <property type="entry name" value="AAA+_ATPase"/>
</dbReference>
<dbReference type="InterPro" id="IPR003439">
    <property type="entry name" value="ABC_transporter-like_ATP-bd"/>
</dbReference>
<dbReference type="InterPro" id="IPR017871">
    <property type="entry name" value="ABC_transporter-like_CS"/>
</dbReference>
<dbReference type="InterPro" id="IPR050153">
    <property type="entry name" value="Metal_Ion_Import_ABC"/>
</dbReference>
<dbReference type="InterPro" id="IPR027417">
    <property type="entry name" value="P-loop_NTPase"/>
</dbReference>
<dbReference type="PANTHER" id="PTHR42734">
    <property type="entry name" value="METAL TRANSPORT SYSTEM ATP-BINDING PROTEIN TM_0124-RELATED"/>
    <property type="match status" value="1"/>
</dbReference>
<dbReference type="PANTHER" id="PTHR42734:SF9">
    <property type="entry name" value="ZINC IMPORT ATP-BINDING PROTEIN ZNUC"/>
    <property type="match status" value="1"/>
</dbReference>
<dbReference type="Pfam" id="PF00005">
    <property type="entry name" value="ABC_tran"/>
    <property type="match status" value="1"/>
</dbReference>
<dbReference type="SMART" id="SM00382">
    <property type="entry name" value="AAA"/>
    <property type="match status" value="1"/>
</dbReference>
<dbReference type="SUPFAM" id="SSF52540">
    <property type="entry name" value="P-loop containing nucleoside triphosphate hydrolases"/>
    <property type="match status" value="1"/>
</dbReference>
<dbReference type="PROSITE" id="PS00211">
    <property type="entry name" value="ABC_TRANSPORTER_1"/>
    <property type="match status" value="1"/>
</dbReference>
<dbReference type="PROSITE" id="PS50893">
    <property type="entry name" value="ABC_TRANSPORTER_2"/>
    <property type="match status" value="1"/>
</dbReference>
<dbReference type="PROSITE" id="PS51298">
    <property type="entry name" value="ZNUC"/>
    <property type="match status" value="1"/>
</dbReference>
<proteinExistence type="inferred from homology"/>
<evidence type="ECO:0000255" key="1">
    <source>
        <dbReference type="HAMAP-Rule" id="MF_01725"/>
    </source>
</evidence>
<evidence type="ECO:0000256" key="2">
    <source>
        <dbReference type="SAM" id="MobiDB-lite"/>
    </source>
</evidence>
<accession>Q2W4W1</accession>
<feature type="chain" id="PRO_0000281516" description="Zinc import ATP-binding protein ZnuC">
    <location>
        <begin position="1"/>
        <end position="262"/>
    </location>
</feature>
<feature type="domain" description="ABC transporter" evidence="1">
    <location>
        <begin position="4"/>
        <end position="220"/>
    </location>
</feature>
<feature type="region of interest" description="Disordered" evidence="2">
    <location>
        <begin position="238"/>
        <end position="262"/>
    </location>
</feature>
<feature type="binding site" evidence="1">
    <location>
        <begin position="36"/>
        <end position="43"/>
    </location>
    <ligand>
        <name>ATP</name>
        <dbReference type="ChEBI" id="CHEBI:30616"/>
    </ligand>
</feature>